<accession>A3DHZ3</accession>
<name>RL34_ACET2</name>
<comment type="similarity">
    <text evidence="1">Belongs to the bacterial ribosomal protein bL34 family.</text>
</comment>
<evidence type="ECO:0000255" key="1">
    <source>
        <dbReference type="HAMAP-Rule" id="MF_00391"/>
    </source>
</evidence>
<evidence type="ECO:0000256" key="2">
    <source>
        <dbReference type="SAM" id="MobiDB-lite"/>
    </source>
</evidence>
<evidence type="ECO:0000305" key="3"/>
<gene>
    <name evidence="1" type="primary">rpmH</name>
    <name type="ordered locus">Cthe_2370</name>
</gene>
<keyword id="KW-1185">Reference proteome</keyword>
<keyword id="KW-0687">Ribonucleoprotein</keyword>
<keyword id="KW-0689">Ribosomal protein</keyword>
<sequence>MLRTYQPKKRQRKKEHGFRKRMKTANGRKVLRRRRLKGRKVLSA</sequence>
<feature type="chain" id="PRO_1000013324" description="Large ribosomal subunit protein bL34">
    <location>
        <begin position="1"/>
        <end position="44"/>
    </location>
</feature>
<feature type="region of interest" description="Disordered" evidence="2">
    <location>
        <begin position="1"/>
        <end position="44"/>
    </location>
</feature>
<feature type="compositionally biased region" description="Basic residues" evidence="2">
    <location>
        <begin position="1"/>
        <end position="23"/>
    </location>
</feature>
<feature type="compositionally biased region" description="Basic residues" evidence="2">
    <location>
        <begin position="29"/>
        <end position="44"/>
    </location>
</feature>
<protein>
    <recommendedName>
        <fullName evidence="1">Large ribosomal subunit protein bL34</fullName>
    </recommendedName>
    <alternativeName>
        <fullName evidence="3">50S ribosomal protein L34</fullName>
    </alternativeName>
</protein>
<proteinExistence type="inferred from homology"/>
<dbReference type="EMBL" id="CP000568">
    <property type="protein sequence ID" value="ABN53572.1"/>
    <property type="molecule type" value="Genomic_DNA"/>
</dbReference>
<dbReference type="RefSeq" id="WP_003513349.1">
    <property type="nucleotide sequence ID" value="NC_009012.1"/>
</dbReference>
<dbReference type="SMR" id="A3DHZ3"/>
<dbReference type="STRING" id="203119.Cthe_2370"/>
<dbReference type="GeneID" id="35805693"/>
<dbReference type="KEGG" id="cth:Cthe_2370"/>
<dbReference type="eggNOG" id="COG0230">
    <property type="taxonomic scope" value="Bacteria"/>
</dbReference>
<dbReference type="HOGENOM" id="CLU_129938_2_0_9"/>
<dbReference type="Proteomes" id="UP000002145">
    <property type="component" value="Chromosome"/>
</dbReference>
<dbReference type="GO" id="GO:1990904">
    <property type="term" value="C:ribonucleoprotein complex"/>
    <property type="evidence" value="ECO:0007669"/>
    <property type="project" value="UniProtKB-KW"/>
</dbReference>
<dbReference type="GO" id="GO:0005840">
    <property type="term" value="C:ribosome"/>
    <property type="evidence" value="ECO:0007669"/>
    <property type="project" value="UniProtKB-KW"/>
</dbReference>
<dbReference type="GO" id="GO:0003735">
    <property type="term" value="F:structural constituent of ribosome"/>
    <property type="evidence" value="ECO:0007669"/>
    <property type="project" value="InterPro"/>
</dbReference>
<dbReference type="GO" id="GO:0006412">
    <property type="term" value="P:translation"/>
    <property type="evidence" value="ECO:0007669"/>
    <property type="project" value="UniProtKB-UniRule"/>
</dbReference>
<dbReference type="FunFam" id="1.10.287.3980:FF:000001">
    <property type="entry name" value="Mitochondrial ribosomal protein L34"/>
    <property type="match status" value="1"/>
</dbReference>
<dbReference type="Gene3D" id="1.10.287.3980">
    <property type="match status" value="1"/>
</dbReference>
<dbReference type="HAMAP" id="MF_00391">
    <property type="entry name" value="Ribosomal_bL34"/>
    <property type="match status" value="1"/>
</dbReference>
<dbReference type="InterPro" id="IPR000271">
    <property type="entry name" value="Ribosomal_bL34"/>
</dbReference>
<dbReference type="NCBIfam" id="TIGR01030">
    <property type="entry name" value="rpmH_bact"/>
    <property type="match status" value="1"/>
</dbReference>
<dbReference type="PANTHER" id="PTHR14503:SF4">
    <property type="entry name" value="LARGE RIBOSOMAL SUBUNIT PROTEIN BL34M"/>
    <property type="match status" value="1"/>
</dbReference>
<dbReference type="PANTHER" id="PTHR14503">
    <property type="entry name" value="MITOCHONDRIAL RIBOSOMAL PROTEIN 34 FAMILY MEMBER"/>
    <property type="match status" value="1"/>
</dbReference>
<dbReference type="Pfam" id="PF00468">
    <property type="entry name" value="Ribosomal_L34"/>
    <property type="match status" value="1"/>
</dbReference>
<reference key="1">
    <citation type="submission" date="2007-02" db="EMBL/GenBank/DDBJ databases">
        <title>Complete sequence of Clostridium thermocellum ATCC 27405.</title>
        <authorList>
            <consortium name="US DOE Joint Genome Institute"/>
            <person name="Copeland A."/>
            <person name="Lucas S."/>
            <person name="Lapidus A."/>
            <person name="Barry K."/>
            <person name="Detter J.C."/>
            <person name="Glavina del Rio T."/>
            <person name="Hammon N."/>
            <person name="Israni S."/>
            <person name="Dalin E."/>
            <person name="Tice H."/>
            <person name="Pitluck S."/>
            <person name="Chertkov O."/>
            <person name="Brettin T."/>
            <person name="Bruce D."/>
            <person name="Han C."/>
            <person name="Tapia R."/>
            <person name="Gilna P."/>
            <person name="Schmutz J."/>
            <person name="Larimer F."/>
            <person name="Land M."/>
            <person name="Hauser L."/>
            <person name="Kyrpides N."/>
            <person name="Mikhailova N."/>
            <person name="Wu J.H.D."/>
            <person name="Newcomb M."/>
            <person name="Richardson P."/>
        </authorList>
    </citation>
    <scope>NUCLEOTIDE SEQUENCE [LARGE SCALE GENOMIC DNA]</scope>
    <source>
        <strain>ATCC 27405 / DSM 1237 / JCM 9322 / NBRC 103400 / NCIMB 10682 / NRRL B-4536 / VPI 7372</strain>
    </source>
</reference>
<organism>
    <name type="scientific">Acetivibrio thermocellus (strain ATCC 27405 / DSM 1237 / JCM 9322 / NBRC 103400 / NCIMB 10682 / NRRL B-4536 / VPI 7372)</name>
    <name type="common">Clostridium thermocellum</name>
    <dbReference type="NCBI Taxonomy" id="203119"/>
    <lineage>
        <taxon>Bacteria</taxon>
        <taxon>Bacillati</taxon>
        <taxon>Bacillota</taxon>
        <taxon>Clostridia</taxon>
        <taxon>Eubacteriales</taxon>
        <taxon>Oscillospiraceae</taxon>
        <taxon>Acetivibrio</taxon>
    </lineage>
</organism>